<feature type="chain" id="PRO_0000201299" description="Thiol:disulfide interchange protein DsbE">
    <location>
        <begin position="1"/>
        <end position="178"/>
    </location>
</feature>
<feature type="topological domain" description="Cytoplasmic" evidence="2">
    <location>
        <begin position="1"/>
        <end position="3"/>
    </location>
</feature>
<feature type="transmembrane region" description="Helical" evidence="2">
    <location>
        <begin position="4"/>
        <end position="24"/>
    </location>
</feature>
<feature type="topological domain" description="Periplasmic" evidence="2">
    <location>
        <begin position="25"/>
        <end position="178"/>
    </location>
</feature>
<feature type="domain" description="Thioredoxin" evidence="3">
    <location>
        <begin position="34"/>
        <end position="178"/>
    </location>
</feature>
<feature type="disulfide bond" description="Redox-active" evidence="3">
    <location>
        <begin position="73"/>
        <end position="76"/>
    </location>
</feature>
<feature type="sequence conflict" description="In Ref. 1; CAA88019." evidence="4" ref="1">
    <original>V</original>
    <variation>L</variation>
    <location>
        <position position="8"/>
    </location>
</feature>
<feature type="sequence conflict" description="In Ref. 1; CAA88019." evidence="4" ref="1">
    <original>R</original>
    <variation>A</variation>
    <location>
        <position position="34"/>
    </location>
</feature>
<feature type="sequence conflict" description="In Ref. 1; CAA88019." evidence="4" ref="1">
    <original>N</original>
    <variation>S</variation>
    <location>
        <position position="44"/>
    </location>
</feature>
<feature type="sequence conflict" description="In Ref. 1; CAA88019." evidence="4" ref="1">
    <original>H</original>
    <variation>Q</variation>
    <location>
        <position position="49"/>
    </location>
</feature>
<feature type="sequence conflict" description="In Ref. 1; CAA88019." evidence="4" ref="1">
    <original>R</original>
    <variation>I</variation>
    <location>
        <position position="60"/>
    </location>
</feature>
<feature type="sequence conflict" description="In Ref. 1; CAA88019." evidence="4" ref="1">
    <original>I</original>
    <variation>V</variation>
    <location>
        <position position="120"/>
    </location>
</feature>
<feature type="sequence conflict" description="In Ref. 1; CAA88019." evidence="4" ref="1">
    <original>Y</original>
    <variation>F</variation>
    <location>
        <position position="152"/>
    </location>
</feature>
<feature type="sequence conflict" description="In Ref. 1; CAA88019." evidence="4" ref="1">
    <original>DE</original>
    <variation>EQ</variation>
    <location>
        <begin position="163"/>
        <end position="164"/>
    </location>
</feature>
<proteinExistence type="inferred from homology"/>
<evidence type="ECO:0000250" key="1"/>
<evidence type="ECO:0000255" key="2"/>
<evidence type="ECO:0000255" key="3">
    <source>
        <dbReference type="PROSITE-ProRule" id="PRU00691"/>
    </source>
</evidence>
<evidence type="ECO:0000305" key="4"/>
<organism>
    <name type="scientific">Pseudomonas fluorescens biotype C</name>
    <dbReference type="NCBI Taxonomy" id="335"/>
    <lineage>
        <taxon>Bacteria</taxon>
        <taxon>Pseudomonadati</taxon>
        <taxon>Pseudomonadota</taxon>
        <taxon>Gammaproteobacteria</taxon>
        <taxon>Pseudomonadales</taxon>
        <taxon>Pseudomonadaceae</taxon>
        <taxon>Pseudomonas</taxon>
    </lineage>
</organism>
<dbReference type="EMBL" id="Z47979">
    <property type="protein sequence ID" value="CAA88019.1"/>
    <property type="molecule type" value="Genomic_DNA"/>
</dbReference>
<dbReference type="EMBL" id="U44827">
    <property type="protein sequence ID" value="AAC44227.1"/>
    <property type="molecule type" value="Genomic_DNA"/>
</dbReference>
<dbReference type="SMR" id="P52237"/>
<dbReference type="GO" id="GO:0030288">
    <property type="term" value="C:outer membrane-bounded periplasmic space"/>
    <property type="evidence" value="ECO:0007669"/>
    <property type="project" value="InterPro"/>
</dbReference>
<dbReference type="GO" id="GO:0005886">
    <property type="term" value="C:plasma membrane"/>
    <property type="evidence" value="ECO:0007669"/>
    <property type="project" value="UniProtKB-SubCell"/>
</dbReference>
<dbReference type="GO" id="GO:0015036">
    <property type="term" value="F:disulfide oxidoreductase activity"/>
    <property type="evidence" value="ECO:0007669"/>
    <property type="project" value="InterPro"/>
</dbReference>
<dbReference type="GO" id="GO:0017004">
    <property type="term" value="P:cytochrome complex assembly"/>
    <property type="evidence" value="ECO:0007669"/>
    <property type="project" value="UniProtKB-KW"/>
</dbReference>
<dbReference type="CDD" id="cd03010">
    <property type="entry name" value="TlpA_like_DsbE"/>
    <property type="match status" value="1"/>
</dbReference>
<dbReference type="Gene3D" id="3.40.30.10">
    <property type="entry name" value="Glutaredoxin"/>
    <property type="match status" value="1"/>
</dbReference>
<dbReference type="InterPro" id="IPR004799">
    <property type="entry name" value="Periplasmic_diS_OxRdtase_DsbE"/>
</dbReference>
<dbReference type="InterPro" id="IPR013740">
    <property type="entry name" value="Redoxin"/>
</dbReference>
<dbReference type="InterPro" id="IPR036249">
    <property type="entry name" value="Thioredoxin-like_sf"/>
</dbReference>
<dbReference type="InterPro" id="IPR013766">
    <property type="entry name" value="Thioredoxin_domain"/>
</dbReference>
<dbReference type="InterPro" id="IPR050553">
    <property type="entry name" value="Thioredoxin_ResA/DsbE_sf"/>
</dbReference>
<dbReference type="NCBIfam" id="TIGR00385">
    <property type="entry name" value="dsbE"/>
    <property type="match status" value="1"/>
</dbReference>
<dbReference type="PANTHER" id="PTHR42852">
    <property type="entry name" value="THIOL:DISULFIDE INTERCHANGE PROTEIN DSBE"/>
    <property type="match status" value="1"/>
</dbReference>
<dbReference type="PANTHER" id="PTHR42852:SF6">
    <property type="entry name" value="THIOL:DISULFIDE INTERCHANGE PROTEIN DSBE"/>
    <property type="match status" value="1"/>
</dbReference>
<dbReference type="Pfam" id="PF08534">
    <property type="entry name" value="Redoxin"/>
    <property type="match status" value="1"/>
</dbReference>
<dbReference type="SUPFAM" id="SSF52833">
    <property type="entry name" value="Thioredoxin-like"/>
    <property type="match status" value="1"/>
</dbReference>
<dbReference type="PROSITE" id="PS51352">
    <property type="entry name" value="THIOREDOXIN_2"/>
    <property type="match status" value="1"/>
</dbReference>
<accession>P52237</accession>
<accession>Q51754</accession>
<reference key="1">
    <citation type="journal article" date="1996" name="Mol. Microbiol.">
        <title>A cytochrome c biogenesis gene involved in pyoverdine production in Pseudomonas fluorescens ATCC 17400.</title>
        <authorList>
            <person name="Gaballa A."/>
            <person name="Koedam N."/>
            <person name="Cornelis P."/>
        </authorList>
    </citation>
    <scope>NUCLEOTIDE SEQUENCE [GENOMIC DNA]</scope>
    <source>
        <strain>ATCC 17400 / DSM 50117 / ICPB 2656-18 / NBRC 15833 / NCIMB 10460 / Stanier C-18</strain>
    </source>
</reference>
<reference key="2">
    <citation type="journal article" date="1996" name="Proc. Natl. Acad. Sci. U.S.A.">
        <title>A chromosomal locus required for copper resistance, competitive fitness, and cytochrome c biogenesis in Pseudomonas fluorescens.</title>
        <authorList>
            <person name="Yang C.-H."/>
            <person name="Azad H.R."/>
            <person name="Cooksey D.A."/>
        </authorList>
    </citation>
    <scope>NUCLEOTIDE SEQUENCE [GENOMIC DNA]</scope>
    <source>
        <strain>09906</strain>
    </source>
</reference>
<gene>
    <name type="primary">dsbE</name>
    <name type="synonym">ccmG</name>
    <name type="synonym">cyt5</name>
    <name type="synonym">tipB</name>
</gene>
<comment type="function">
    <text evidence="1">Involved in disulfide bond formation. Catalyzes a late, reductive step in the assembly of periplasmic c-type cytochromes, probably the reduction of disulfide bonds of the apocytochrome c to allow covalent linkage with the heme. Possible subunit of a heme lyase (By similarity).</text>
</comment>
<comment type="subcellular location">
    <subcellularLocation>
        <location evidence="1">Cell inner membrane</location>
        <topology evidence="1">Single-pass membrane protein</topology>
        <orientation evidence="1">Periplasmic side</orientation>
    </subcellularLocation>
</comment>
<comment type="similarity">
    <text evidence="4">Belongs to the thioredoxin family. DsbE subfamily.</text>
</comment>
<sequence length="178" mass="20043">MKRWLMVVPLALFLLVAVFLYRGLYLDPAELPSRMIGKPFPAFNLPTVHGDKTLTQADLRGKPALVNVWATWCISCRVEHPVLNKLAEKGVVIYGINYKDDNAAALKWLAEFHNPYQLDIRDEDGNLGLNLGVYGAPETFFIDAKGVIRDKYVGVIDEVVWRDELAAKYQALVDEAKP</sequence>
<protein>
    <recommendedName>
        <fullName>Thiol:disulfide interchange protein DsbE</fullName>
    </recommendedName>
    <alternativeName>
        <fullName>Cytochrome c biogenesis protein CcmG</fullName>
    </alternativeName>
</protein>
<keyword id="KW-0997">Cell inner membrane</keyword>
<keyword id="KW-1003">Cell membrane</keyword>
<keyword id="KW-0201">Cytochrome c-type biogenesis</keyword>
<keyword id="KW-1015">Disulfide bond</keyword>
<keyword id="KW-0472">Membrane</keyword>
<keyword id="KW-0676">Redox-active center</keyword>
<keyword id="KW-0812">Transmembrane</keyword>
<keyword id="KW-1133">Transmembrane helix</keyword>
<name>DSBE_PSEFC</name>